<name>ERPA_BORA1</name>
<organism>
    <name type="scientific">Bordetella avium (strain 197N)</name>
    <dbReference type="NCBI Taxonomy" id="360910"/>
    <lineage>
        <taxon>Bacteria</taxon>
        <taxon>Pseudomonadati</taxon>
        <taxon>Pseudomonadota</taxon>
        <taxon>Betaproteobacteria</taxon>
        <taxon>Burkholderiales</taxon>
        <taxon>Alcaligenaceae</taxon>
        <taxon>Bordetella</taxon>
    </lineage>
</organism>
<proteinExistence type="inferred from homology"/>
<keyword id="KW-0408">Iron</keyword>
<keyword id="KW-0411">Iron-sulfur</keyword>
<keyword id="KW-0479">Metal-binding</keyword>
<keyword id="KW-1185">Reference proteome</keyword>
<protein>
    <recommendedName>
        <fullName evidence="1">Putative iron-sulfur cluster insertion protein ErpA</fullName>
    </recommendedName>
</protein>
<dbReference type="EMBL" id="AM167904">
    <property type="protein sequence ID" value="CAJ50576.1"/>
    <property type="molecule type" value="Genomic_DNA"/>
</dbReference>
<dbReference type="RefSeq" id="WP_012418605.1">
    <property type="nucleotide sequence ID" value="NC_010645.1"/>
</dbReference>
<dbReference type="SMR" id="Q2KV08"/>
<dbReference type="STRING" id="360910.BAV2966"/>
<dbReference type="GeneID" id="92933776"/>
<dbReference type="KEGG" id="bav:BAV2966"/>
<dbReference type="eggNOG" id="COG0316">
    <property type="taxonomic scope" value="Bacteria"/>
</dbReference>
<dbReference type="HOGENOM" id="CLU_069054_5_3_4"/>
<dbReference type="OrthoDB" id="9801228at2"/>
<dbReference type="Proteomes" id="UP000001977">
    <property type="component" value="Chromosome"/>
</dbReference>
<dbReference type="GO" id="GO:0051537">
    <property type="term" value="F:2 iron, 2 sulfur cluster binding"/>
    <property type="evidence" value="ECO:0007669"/>
    <property type="project" value="TreeGrafter"/>
</dbReference>
<dbReference type="GO" id="GO:0051539">
    <property type="term" value="F:4 iron, 4 sulfur cluster binding"/>
    <property type="evidence" value="ECO:0007669"/>
    <property type="project" value="TreeGrafter"/>
</dbReference>
<dbReference type="GO" id="GO:0005506">
    <property type="term" value="F:iron ion binding"/>
    <property type="evidence" value="ECO:0007669"/>
    <property type="project" value="UniProtKB-UniRule"/>
</dbReference>
<dbReference type="GO" id="GO:0016226">
    <property type="term" value="P:iron-sulfur cluster assembly"/>
    <property type="evidence" value="ECO:0007669"/>
    <property type="project" value="UniProtKB-UniRule"/>
</dbReference>
<dbReference type="FunFam" id="2.60.300.12:FF:000002">
    <property type="entry name" value="Iron-sulfur cluster insertion protein ErpA"/>
    <property type="match status" value="1"/>
</dbReference>
<dbReference type="Gene3D" id="2.60.300.12">
    <property type="entry name" value="HesB-like domain"/>
    <property type="match status" value="1"/>
</dbReference>
<dbReference type="HAMAP" id="MF_01380">
    <property type="entry name" value="Fe_S_insert_ErpA"/>
    <property type="match status" value="1"/>
</dbReference>
<dbReference type="InterPro" id="IPR000361">
    <property type="entry name" value="FeS_biogenesis"/>
</dbReference>
<dbReference type="InterPro" id="IPR016092">
    <property type="entry name" value="FeS_cluster_insertion"/>
</dbReference>
<dbReference type="InterPro" id="IPR017870">
    <property type="entry name" value="FeS_cluster_insertion_CS"/>
</dbReference>
<dbReference type="InterPro" id="IPR023063">
    <property type="entry name" value="FeS_cluster_insertion_RrpA"/>
</dbReference>
<dbReference type="InterPro" id="IPR035903">
    <property type="entry name" value="HesB-like_dom_sf"/>
</dbReference>
<dbReference type="NCBIfam" id="TIGR00049">
    <property type="entry name" value="iron-sulfur cluster assembly accessory protein"/>
    <property type="match status" value="1"/>
</dbReference>
<dbReference type="NCBIfam" id="NF010147">
    <property type="entry name" value="PRK13623.1"/>
    <property type="match status" value="1"/>
</dbReference>
<dbReference type="PANTHER" id="PTHR43011">
    <property type="entry name" value="IRON-SULFUR CLUSTER ASSEMBLY 2 HOMOLOG, MITOCHONDRIAL"/>
    <property type="match status" value="1"/>
</dbReference>
<dbReference type="PANTHER" id="PTHR43011:SF1">
    <property type="entry name" value="IRON-SULFUR CLUSTER ASSEMBLY 2 HOMOLOG, MITOCHONDRIAL"/>
    <property type="match status" value="1"/>
</dbReference>
<dbReference type="Pfam" id="PF01521">
    <property type="entry name" value="Fe-S_biosyn"/>
    <property type="match status" value="1"/>
</dbReference>
<dbReference type="SUPFAM" id="SSF89360">
    <property type="entry name" value="HesB-like domain"/>
    <property type="match status" value="1"/>
</dbReference>
<dbReference type="PROSITE" id="PS01152">
    <property type="entry name" value="HESB"/>
    <property type="match status" value="1"/>
</dbReference>
<evidence type="ECO:0000255" key="1">
    <source>
        <dbReference type="HAMAP-Rule" id="MF_01380"/>
    </source>
</evidence>
<comment type="function">
    <text evidence="1">Required for insertion of 4Fe-4S clusters.</text>
</comment>
<comment type="cofactor">
    <cofactor evidence="1">
        <name>iron-sulfur cluster</name>
        <dbReference type="ChEBI" id="CHEBI:30408"/>
    </cofactor>
    <text evidence="1">Binds 1 iron-sulfur cluster per subunit.</text>
</comment>
<comment type="subunit">
    <text evidence="1">Homodimer.</text>
</comment>
<comment type="similarity">
    <text evidence="1">Belongs to the HesB/IscA family.</text>
</comment>
<sequence length="123" mass="13242">MNAITETVDLQAPPPVPLVFTDSAAAKVKDLLAEEGNPELKLRVFVQGGGCSGFQYGFTFDEVVNEDDTVLDKEGVQLLVDPMSFQYLVGAEIDYKEDLEGAQFVIRNPNATTTCGCGSSFSV</sequence>
<feature type="chain" id="PRO_0000311449" description="Putative iron-sulfur cluster insertion protein ErpA">
    <location>
        <begin position="1"/>
        <end position="123"/>
    </location>
</feature>
<feature type="binding site" evidence="1">
    <location>
        <position position="51"/>
    </location>
    <ligand>
        <name>iron-sulfur cluster</name>
        <dbReference type="ChEBI" id="CHEBI:30408"/>
    </ligand>
</feature>
<feature type="binding site" evidence="1">
    <location>
        <position position="115"/>
    </location>
    <ligand>
        <name>iron-sulfur cluster</name>
        <dbReference type="ChEBI" id="CHEBI:30408"/>
    </ligand>
</feature>
<feature type="binding site" evidence="1">
    <location>
        <position position="117"/>
    </location>
    <ligand>
        <name>iron-sulfur cluster</name>
        <dbReference type="ChEBI" id="CHEBI:30408"/>
    </ligand>
</feature>
<accession>Q2KV08</accession>
<gene>
    <name evidence="1" type="primary">erpA</name>
    <name type="ordered locus">BAV2966</name>
</gene>
<reference key="1">
    <citation type="journal article" date="2006" name="J. Bacteriol.">
        <title>Comparison of the genome sequence of the poultry pathogen Bordetella avium with those of B. bronchiseptica, B. pertussis, and B. parapertussis reveals extensive diversity in surface structures associated with host interaction.</title>
        <authorList>
            <person name="Sebaihia M."/>
            <person name="Preston A."/>
            <person name="Maskell D.J."/>
            <person name="Kuzmiak H."/>
            <person name="Connell T.D."/>
            <person name="King N.D."/>
            <person name="Orndorff P.E."/>
            <person name="Miyamoto D.M."/>
            <person name="Thomson N.R."/>
            <person name="Harris D."/>
            <person name="Goble A."/>
            <person name="Lord A."/>
            <person name="Murphy L."/>
            <person name="Quail M.A."/>
            <person name="Rutter S."/>
            <person name="Squares R."/>
            <person name="Squares S."/>
            <person name="Woodward J."/>
            <person name="Parkhill J."/>
            <person name="Temple L.M."/>
        </authorList>
    </citation>
    <scope>NUCLEOTIDE SEQUENCE [LARGE SCALE GENOMIC DNA]</scope>
    <source>
        <strain>197N</strain>
    </source>
</reference>